<dbReference type="EC" id="3.6.5.n1" evidence="1"/>
<dbReference type="EMBL" id="CP000151">
    <property type="protein sequence ID" value="ABB07841.1"/>
    <property type="molecule type" value="Genomic_DNA"/>
</dbReference>
<dbReference type="RefSeq" id="WP_011351412.1">
    <property type="nucleotide sequence ID" value="NC_007510.1"/>
</dbReference>
<dbReference type="SMR" id="Q39I75"/>
<dbReference type="GeneID" id="45094145"/>
<dbReference type="KEGG" id="bur:Bcep18194_A4244"/>
<dbReference type="PATRIC" id="fig|482957.22.peg.1136"/>
<dbReference type="HOGENOM" id="CLU_009995_3_3_4"/>
<dbReference type="Proteomes" id="UP000002705">
    <property type="component" value="Chromosome 1"/>
</dbReference>
<dbReference type="GO" id="GO:0005886">
    <property type="term" value="C:plasma membrane"/>
    <property type="evidence" value="ECO:0007669"/>
    <property type="project" value="UniProtKB-SubCell"/>
</dbReference>
<dbReference type="GO" id="GO:0005525">
    <property type="term" value="F:GTP binding"/>
    <property type="evidence" value="ECO:0007669"/>
    <property type="project" value="UniProtKB-UniRule"/>
</dbReference>
<dbReference type="GO" id="GO:0003924">
    <property type="term" value="F:GTPase activity"/>
    <property type="evidence" value="ECO:0007669"/>
    <property type="project" value="UniProtKB-UniRule"/>
</dbReference>
<dbReference type="GO" id="GO:0097216">
    <property type="term" value="F:guanosine tetraphosphate binding"/>
    <property type="evidence" value="ECO:0007669"/>
    <property type="project" value="UniProtKB-ARBA"/>
</dbReference>
<dbReference type="GO" id="GO:0043022">
    <property type="term" value="F:ribosome binding"/>
    <property type="evidence" value="ECO:0007669"/>
    <property type="project" value="UniProtKB-UniRule"/>
</dbReference>
<dbReference type="GO" id="GO:0003746">
    <property type="term" value="F:translation elongation factor activity"/>
    <property type="evidence" value="ECO:0007669"/>
    <property type="project" value="UniProtKB-UniRule"/>
</dbReference>
<dbReference type="GO" id="GO:0045727">
    <property type="term" value="P:positive regulation of translation"/>
    <property type="evidence" value="ECO:0007669"/>
    <property type="project" value="UniProtKB-UniRule"/>
</dbReference>
<dbReference type="CDD" id="cd03699">
    <property type="entry name" value="EF4_II"/>
    <property type="match status" value="1"/>
</dbReference>
<dbReference type="CDD" id="cd16260">
    <property type="entry name" value="EF4_III"/>
    <property type="match status" value="1"/>
</dbReference>
<dbReference type="CDD" id="cd01890">
    <property type="entry name" value="LepA"/>
    <property type="match status" value="1"/>
</dbReference>
<dbReference type="CDD" id="cd03709">
    <property type="entry name" value="lepA_C"/>
    <property type="match status" value="1"/>
</dbReference>
<dbReference type="FunFam" id="3.40.50.300:FF:000078">
    <property type="entry name" value="Elongation factor 4"/>
    <property type="match status" value="1"/>
</dbReference>
<dbReference type="FunFam" id="2.40.30.10:FF:000015">
    <property type="entry name" value="Translation factor GUF1, mitochondrial"/>
    <property type="match status" value="1"/>
</dbReference>
<dbReference type="FunFam" id="3.30.70.240:FF:000007">
    <property type="entry name" value="Translation factor GUF1, mitochondrial"/>
    <property type="match status" value="1"/>
</dbReference>
<dbReference type="FunFam" id="3.30.70.2570:FF:000001">
    <property type="entry name" value="Translation factor GUF1, mitochondrial"/>
    <property type="match status" value="1"/>
</dbReference>
<dbReference type="FunFam" id="3.30.70.870:FF:000004">
    <property type="entry name" value="Translation factor GUF1, mitochondrial"/>
    <property type="match status" value="1"/>
</dbReference>
<dbReference type="Gene3D" id="3.30.70.240">
    <property type="match status" value="1"/>
</dbReference>
<dbReference type="Gene3D" id="3.30.70.2570">
    <property type="entry name" value="Elongation factor 4, C-terminal domain"/>
    <property type="match status" value="1"/>
</dbReference>
<dbReference type="Gene3D" id="3.30.70.870">
    <property type="entry name" value="Elongation Factor G (Translational Gtpase), domain 3"/>
    <property type="match status" value="1"/>
</dbReference>
<dbReference type="Gene3D" id="3.40.50.300">
    <property type="entry name" value="P-loop containing nucleotide triphosphate hydrolases"/>
    <property type="match status" value="1"/>
</dbReference>
<dbReference type="Gene3D" id="2.40.30.10">
    <property type="entry name" value="Translation factors"/>
    <property type="match status" value="1"/>
</dbReference>
<dbReference type="HAMAP" id="MF_00071">
    <property type="entry name" value="LepA"/>
    <property type="match status" value="1"/>
</dbReference>
<dbReference type="InterPro" id="IPR006297">
    <property type="entry name" value="EF-4"/>
</dbReference>
<dbReference type="InterPro" id="IPR035647">
    <property type="entry name" value="EFG_III/V"/>
</dbReference>
<dbReference type="InterPro" id="IPR000640">
    <property type="entry name" value="EFG_V-like"/>
</dbReference>
<dbReference type="InterPro" id="IPR004161">
    <property type="entry name" value="EFTu-like_2"/>
</dbReference>
<dbReference type="InterPro" id="IPR031157">
    <property type="entry name" value="G_TR_CS"/>
</dbReference>
<dbReference type="InterPro" id="IPR038363">
    <property type="entry name" value="LepA_C_sf"/>
</dbReference>
<dbReference type="InterPro" id="IPR013842">
    <property type="entry name" value="LepA_CTD"/>
</dbReference>
<dbReference type="InterPro" id="IPR035654">
    <property type="entry name" value="LepA_IV"/>
</dbReference>
<dbReference type="InterPro" id="IPR027417">
    <property type="entry name" value="P-loop_NTPase"/>
</dbReference>
<dbReference type="InterPro" id="IPR005225">
    <property type="entry name" value="Small_GTP-bd"/>
</dbReference>
<dbReference type="InterPro" id="IPR000795">
    <property type="entry name" value="T_Tr_GTP-bd_dom"/>
</dbReference>
<dbReference type="InterPro" id="IPR009000">
    <property type="entry name" value="Transl_B-barrel_sf"/>
</dbReference>
<dbReference type="NCBIfam" id="TIGR01393">
    <property type="entry name" value="lepA"/>
    <property type="match status" value="1"/>
</dbReference>
<dbReference type="NCBIfam" id="TIGR00231">
    <property type="entry name" value="small_GTP"/>
    <property type="match status" value="1"/>
</dbReference>
<dbReference type="PANTHER" id="PTHR43512:SF4">
    <property type="entry name" value="TRANSLATION FACTOR GUF1 HOMOLOG, CHLOROPLASTIC"/>
    <property type="match status" value="1"/>
</dbReference>
<dbReference type="PANTHER" id="PTHR43512">
    <property type="entry name" value="TRANSLATION FACTOR GUF1-RELATED"/>
    <property type="match status" value="1"/>
</dbReference>
<dbReference type="Pfam" id="PF00679">
    <property type="entry name" value="EFG_C"/>
    <property type="match status" value="1"/>
</dbReference>
<dbReference type="Pfam" id="PF00009">
    <property type="entry name" value="GTP_EFTU"/>
    <property type="match status" value="1"/>
</dbReference>
<dbReference type="Pfam" id="PF03144">
    <property type="entry name" value="GTP_EFTU_D2"/>
    <property type="match status" value="1"/>
</dbReference>
<dbReference type="Pfam" id="PF06421">
    <property type="entry name" value="LepA_C"/>
    <property type="match status" value="1"/>
</dbReference>
<dbReference type="PRINTS" id="PR00315">
    <property type="entry name" value="ELONGATNFCT"/>
</dbReference>
<dbReference type="SMART" id="SM00838">
    <property type="entry name" value="EFG_C"/>
    <property type="match status" value="1"/>
</dbReference>
<dbReference type="SUPFAM" id="SSF54980">
    <property type="entry name" value="EF-G C-terminal domain-like"/>
    <property type="match status" value="2"/>
</dbReference>
<dbReference type="SUPFAM" id="SSF52540">
    <property type="entry name" value="P-loop containing nucleoside triphosphate hydrolases"/>
    <property type="match status" value="1"/>
</dbReference>
<dbReference type="SUPFAM" id="SSF50447">
    <property type="entry name" value="Translation proteins"/>
    <property type="match status" value="1"/>
</dbReference>
<dbReference type="PROSITE" id="PS00301">
    <property type="entry name" value="G_TR_1"/>
    <property type="match status" value="1"/>
</dbReference>
<dbReference type="PROSITE" id="PS51722">
    <property type="entry name" value="G_TR_2"/>
    <property type="match status" value="1"/>
</dbReference>
<name>LEPA_BURL3</name>
<keyword id="KW-0997">Cell inner membrane</keyword>
<keyword id="KW-1003">Cell membrane</keyword>
<keyword id="KW-0342">GTP-binding</keyword>
<keyword id="KW-0378">Hydrolase</keyword>
<keyword id="KW-0472">Membrane</keyword>
<keyword id="KW-0547">Nucleotide-binding</keyword>
<keyword id="KW-0648">Protein biosynthesis</keyword>
<accession>Q39I75</accession>
<sequence>MDHIRNFSIIAHIDHGKSTLADRIIQVCGGLADREMEAQVLDSMDIERERGITIKAQTAALSYRARDGKVYNLNLIDTPGHVDFSYEVSRSLSACEGALLVVDASQGVEAQTVANCYTAIELGVEVVPVLNKIDLPAANPENAIEEIEDVIGIDATDATRCSAKTGLGVEDVLESLIAKVPPPKGDPAAPLQALIIDSWFDNYVGVVMLVRIVNGTLRPKDKIKLMATGAQYPVEHIGVFTPKSRNLETLSAGQVGFIIAGIKELTAAKVGDTVTHATKAAVEPLPGFKEVKPQVFAGLYPVEANQYDALRESLEKLKLNDASLQYEPEVSQALGFGFRCGFLGLLHMEIVQERLEREFDMDLITTAPTVVYEVMMSDGAIIKVENPAKMPEPPRIEEIREPIVTVNLYMPQDYVGSVITLCEQKRGSQINMQYHGRQVQLTYEIPMAEIVLDFFDRLKSVSRGYASMDYEFKEYRAADVVKVDMLINGDKVDALSVIVHRSQSQYRGREVAAKMREIIPRQMYDVAIQATIGAHIIARENIKALRKNVLAKCYGGDISRKKKLLEKQKAGKKRMKQVGSVEIPQEAFLAILRVEDK</sequence>
<proteinExistence type="inferred from homology"/>
<gene>
    <name evidence="1" type="primary">lepA</name>
    <name type="ordered locus">Bcep18194_A4244</name>
</gene>
<comment type="function">
    <text evidence="1">Required for accurate and efficient protein synthesis under certain stress conditions. May act as a fidelity factor of the translation reaction, by catalyzing a one-codon backward translocation of tRNAs on improperly translocated ribosomes. Back-translocation proceeds from a post-translocation (POST) complex to a pre-translocation (PRE) complex, thus giving elongation factor G a second chance to translocate the tRNAs correctly. Binds to ribosomes in a GTP-dependent manner.</text>
</comment>
<comment type="catalytic activity">
    <reaction evidence="1">
        <text>GTP + H2O = GDP + phosphate + H(+)</text>
        <dbReference type="Rhea" id="RHEA:19669"/>
        <dbReference type="ChEBI" id="CHEBI:15377"/>
        <dbReference type="ChEBI" id="CHEBI:15378"/>
        <dbReference type="ChEBI" id="CHEBI:37565"/>
        <dbReference type="ChEBI" id="CHEBI:43474"/>
        <dbReference type="ChEBI" id="CHEBI:58189"/>
        <dbReference type="EC" id="3.6.5.n1"/>
    </reaction>
</comment>
<comment type="subcellular location">
    <subcellularLocation>
        <location evidence="1">Cell inner membrane</location>
        <topology evidence="1">Peripheral membrane protein</topology>
        <orientation evidence="1">Cytoplasmic side</orientation>
    </subcellularLocation>
</comment>
<comment type="similarity">
    <text evidence="1">Belongs to the TRAFAC class translation factor GTPase superfamily. Classic translation factor GTPase family. LepA subfamily.</text>
</comment>
<reference key="1">
    <citation type="submission" date="2005-10" db="EMBL/GenBank/DDBJ databases">
        <title>Complete sequence of chromosome 1 of Burkholderia sp. 383.</title>
        <authorList>
            <consortium name="US DOE Joint Genome Institute"/>
            <person name="Copeland A."/>
            <person name="Lucas S."/>
            <person name="Lapidus A."/>
            <person name="Barry K."/>
            <person name="Detter J.C."/>
            <person name="Glavina T."/>
            <person name="Hammon N."/>
            <person name="Israni S."/>
            <person name="Pitluck S."/>
            <person name="Chain P."/>
            <person name="Malfatti S."/>
            <person name="Shin M."/>
            <person name="Vergez L."/>
            <person name="Schmutz J."/>
            <person name="Larimer F."/>
            <person name="Land M."/>
            <person name="Kyrpides N."/>
            <person name="Lykidis A."/>
            <person name="Richardson P."/>
        </authorList>
    </citation>
    <scope>NUCLEOTIDE SEQUENCE [LARGE SCALE GENOMIC DNA]</scope>
    <source>
        <strain>ATCC 17760 / DSM 23089 / LMG 22485 / NCIMB 9086 / R18194 / 383</strain>
    </source>
</reference>
<evidence type="ECO:0000255" key="1">
    <source>
        <dbReference type="HAMAP-Rule" id="MF_00071"/>
    </source>
</evidence>
<feature type="chain" id="PRO_0000224748" description="Elongation factor 4">
    <location>
        <begin position="1"/>
        <end position="597"/>
    </location>
</feature>
<feature type="domain" description="tr-type G">
    <location>
        <begin position="2"/>
        <end position="184"/>
    </location>
</feature>
<feature type="binding site" evidence="1">
    <location>
        <begin position="14"/>
        <end position="19"/>
    </location>
    <ligand>
        <name>GTP</name>
        <dbReference type="ChEBI" id="CHEBI:37565"/>
    </ligand>
</feature>
<feature type="binding site" evidence="1">
    <location>
        <begin position="131"/>
        <end position="134"/>
    </location>
    <ligand>
        <name>GTP</name>
        <dbReference type="ChEBI" id="CHEBI:37565"/>
    </ligand>
</feature>
<protein>
    <recommendedName>
        <fullName evidence="1">Elongation factor 4</fullName>
        <shortName evidence="1">EF-4</shortName>
        <ecNumber evidence="1">3.6.5.n1</ecNumber>
    </recommendedName>
    <alternativeName>
        <fullName evidence="1">Ribosomal back-translocase LepA</fullName>
    </alternativeName>
</protein>
<organism>
    <name type="scientific">Burkholderia lata (strain ATCC 17760 / DSM 23089 / LMG 22485 / NCIMB 9086 / R18194 / 383)</name>
    <dbReference type="NCBI Taxonomy" id="482957"/>
    <lineage>
        <taxon>Bacteria</taxon>
        <taxon>Pseudomonadati</taxon>
        <taxon>Pseudomonadota</taxon>
        <taxon>Betaproteobacteria</taxon>
        <taxon>Burkholderiales</taxon>
        <taxon>Burkholderiaceae</taxon>
        <taxon>Burkholderia</taxon>
        <taxon>Burkholderia cepacia complex</taxon>
    </lineage>
</organism>